<evidence type="ECO:0000255" key="1">
    <source>
        <dbReference type="HAMAP-Rule" id="MF_00501"/>
    </source>
</evidence>
<evidence type="ECO:0000305" key="2"/>
<organism>
    <name type="scientific">Laribacter hongkongensis (strain HLHK9)</name>
    <dbReference type="NCBI Taxonomy" id="557598"/>
    <lineage>
        <taxon>Bacteria</taxon>
        <taxon>Pseudomonadati</taxon>
        <taxon>Pseudomonadota</taxon>
        <taxon>Betaproteobacteria</taxon>
        <taxon>Neisseriales</taxon>
        <taxon>Aquaspirillaceae</taxon>
        <taxon>Laribacter</taxon>
    </lineage>
</organism>
<sequence length="71" mass="7982">MKANIHPDYTDLKVTCSCGNAFTTKSTMSKDAFHIEVCSECHPFYTGKQKVVDTAGRIDKFKQKFGKFSRG</sequence>
<name>RL31_LARHH</name>
<feature type="chain" id="PRO_1000176966" description="Large ribosomal subunit protein bL31">
    <location>
        <begin position="1"/>
        <end position="71"/>
    </location>
</feature>
<feature type="binding site" evidence="1">
    <location>
        <position position="16"/>
    </location>
    <ligand>
        <name>Zn(2+)</name>
        <dbReference type="ChEBI" id="CHEBI:29105"/>
    </ligand>
</feature>
<feature type="binding site" evidence="1">
    <location>
        <position position="18"/>
    </location>
    <ligand>
        <name>Zn(2+)</name>
        <dbReference type="ChEBI" id="CHEBI:29105"/>
    </ligand>
</feature>
<feature type="binding site" evidence="1">
    <location>
        <position position="38"/>
    </location>
    <ligand>
        <name>Zn(2+)</name>
        <dbReference type="ChEBI" id="CHEBI:29105"/>
    </ligand>
</feature>
<feature type="binding site" evidence="1">
    <location>
        <position position="41"/>
    </location>
    <ligand>
        <name>Zn(2+)</name>
        <dbReference type="ChEBI" id="CHEBI:29105"/>
    </ligand>
</feature>
<accession>C1D7F6</accession>
<dbReference type="EMBL" id="CP001154">
    <property type="protein sequence ID" value="ACO74396.1"/>
    <property type="molecule type" value="Genomic_DNA"/>
</dbReference>
<dbReference type="RefSeq" id="WP_012696882.1">
    <property type="nucleotide sequence ID" value="NC_012559.1"/>
</dbReference>
<dbReference type="SMR" id="C1D7F6"/>
<dbReference type="STRING" id="557598.LHK_01406"/>
<dbReference type="GeneID" id="75109818"/>
<dbReference type="KEGG" id="lhk:LHK_01406"/>
<dbReference type="eggNOG" id="COG0254">
    <property type="taxonomic scope" value="Bacteria"/>
</dbReference>
<dbReference type="HOGENOM" id="CLU_114306_4_0_4"/>
<dbReference type="Proteomes" id="UP000002010">
    <property type="component" value="Chromosome"/>
</dbReference>
<dbReference type="GO" id="GO:1990904">
    <property type="term" value="C:ribonucleoprotein complex"/>
    <property type="evidence" value="ECO:0007669"/>
    <property type="project" value="UniProtKB-KW"/>
</dbReference>
<dbReference type="GO" id="GO:0005840">
    <property type="term" value="C:ribosome"/>
    <property type="evidence" value="ECO:0007669"/>
    <property type="project" value="UniProtKB-KW"/>
</dbReference>
<dbReference type="GO" id="GO:0046872">
    <property type="term" value="F:metal ion binding"/>
    <property type="evidence" value="ECO:0007669"/>
    <property type="project" value="UniProtKB-KW"/>
</dbReference>
<dbReference type="GO" id="GO:0019843">
    <property type="term" value="F:rRNA binding"/>
    <property type="evidence" value="ECO:0007669"/>
    <property type="project" value="UniProtKB-KW"/>
</dbReference>
<dbReference type="GO" id="GO:0003735">
    <property type="term" value="F:structural constituent of ribosome"/>
    <property type="evidence" value="ECO:0007669"/>
    <property type="project" value="InterPro"/>
</dbReference>
<dbReference type="GO" id="GO:0006412">
    <property type="term" value="P:translation"/>
    <property type="evidence" value="ECO:0007669"/>
    <property type="project" value="UniProtKB-UniRule"/>
</dbReference>
<dbReference type="Gene3D" id="4.10.830.30">
    <property type="entry name" value="Ribosomal protein L31"/>
    <property type="match status" value="1"/>
</dbReference>
<dbReference type="HAMAP" id="MF_00501">
    <property type="entry name" value="Ribosomal_bL31_1"/>
    <property type="match status" value="1"/>
</dbReference>
<dbReference type="InterPro" id="IPR034704">
    <property type="entry name" value="Ribosomal_bL28/bL31-like_sf"/>
</dbReference>
<dbReference type="InterPro" id="IPR002150">
    <property type="entry name" value="Ribosomal_bL31"/>
</dbReference>
<dbReference type="InterPro" id="IPR027491">
    <property type="entry name" value="Ribosomal_bL31_A"/>
</dbReference>
<dbReference type="InterPro" id="IPR042105">
    <property type="entry name" value="Ribosomal_bL31_sf"/>
</dbReference>
<dbReference type="NCBIfam" id="TIGR00105">
    <property type="entry name" value="L31"/>
    <property type="match status" value="1"/>
</dbReference>
<dbReference type="NCBIfam" id="NF000612">
    <property type="entry name" value="PRK00019.1"/>
    <property type="match status" value="1"/>
</dbReference>
<dbReference type="NCBIfam" id="NF001809">
    <property type="entry name" value="PRK00528.1"/>
    <property type="match status" value="1"/>
</dbReference>
<dbReference type="PANTHER" id="PTHR33280">
    <property type="entry name" value="50S RIBOSOMAL PROTEIN L31, CHLOROPLASTIC"/>
    <property type="match status" value="1"/>
</dbReference>
<dbReference type="PANTHER" id="PTHR33280:SF6">
    <property type="entry name" value="LARGE RIBOSOMAL SUBUNIT PROTEIN BL31A"/>
    <property type="match status" value="1"/>
</dbReference>
<dbReference type="Pfam" id="PF01197">
    <property type="entry name" value="Ribosomal_L31"/>
    <property type="match status" value="1"/>
</dbReference>
<dbReference type="PRINTS" id="PR01249">
    <property type="entry name" value="RIBOSOMALL31"/>
</dbReference>
<dbReference type="SUPFAM" id="SSF143800">
    <property type="entry name" value="L28p-like"/>
    <property type="match status" value="1"/>
</dbReference>
<dbReference type="PROSITE" id="PS01143">
    <property type="entry name" value="RIBOSOMAL_L31"/>
    <property type="match status" value="1"/>
</dbReference>
<comment type="function">
    <text evidence="1">Binds the 23S rRNA.</text>
</comment>
<comment type="cofactor">
    <cofactor evidence="1">
        <name>Zn(2+)</name>
        <dbReference type="ChEBI" id="CHEBI:29105"/>
    </cofactor>
    <text evidence="1">Binds 1 zinc ion per subunit.</text>
</comment>
<comment type="subunit">
    <text evidence="1">Part of the 50S ribosomal subunit.</text>
</comment>
<comment type="similarity">
    <text evidence="1">Belongs to the bacterial ribosomal protein bL31 family. Type A subfamily.</text>
</comment>
<proteinExistence type="inferred from homology"/>
<reference key="1">
    <citation type="journal article" date="2009" name="PLoS Genet.">
        <title>The complete genome and proteome of Laribacter hongkongensis reveal potential mechanisms for adaptations to different temperatures and habitats.</title>
        <authorList>
            <person name="Woo P.C.Y."/>
            <person name="Lau S.K.P."/>
            <person name="Tse H."/>
            <person name="Teng J.L.L."/>
            <person name="Curreem S.O."/>
            <person name="Tsang A.K.L."/>
            <person name="Fan R.Y.Y."/>
            <person name="Wong G.K.M."/>
            <person name="Huang Y."/>
            <person name="Loman N.J."/>
            <person name="Snyder L.A.S."/>
            <person name="Cai J.J."/>
            <person name="Huang J.-D."/>
            <person name="Mak W."/>
            <person name="Pallen M.J."/>
            <person name="Lok S."/>
            <person name="Yuen K.-Y."/>
        </authorList>
    </citation>
    <scope>NUCLEOTIDE SEQUENCE [LARGE SCALE GENOMIC DNA]</scope>
    <source>
        <strain>HLHK9</strain>
    </source>
</reference>
<gene>
    <name evidence="1" type="primary">rpmE</name>
    <name type="ordered locus">LHK_01406</name>
</gene>
<protein>
    <recommendedName>
        <fullName evidence="1">Large ribosomal subunit protein bL31</fullName>
    </recommendedName>
    <alternativeName>
        <fullName evidence="2">50S ribosomal protein L31</fullName>
    </alternativeName>
</protein>
<keyword id="KW-0479">Metal-binding</keyword>
<keyword id="KW-1185">Reference proteome</keyword>
<keyword id="KW-0687">Ribonucleoprotein</keyword>
<keyword id="KW-0689">Ribosomal protein</keyword>
<keyword id="KW-0694">RNA-binding</keyword>
<keyword id="KW-0699">rRNA-binding</keyword>
<keyword id="KW-0862">Zinc</keyword>